<accession>Q5M6E6</accession>
<gene>
    <name evidence="1" type="primary">rpsI</name>
    <name type="ordered locus">stu0094</name>
</gene>
<organism>
    <name type="scientific">Streptococcus thermophilus (strain ATCC BAA-250 / LMG 18311)</name>
    <dbReference type="NCBI Taxonomy" id="264199"/>
    <lineage>
        <taxon>Bacteria</taxon>
        <taxon>Bacillati</taxon>
        <taxon>Bacillota</taxon>
        <taxon>Bacilli</taxon>
        <taxon>Lactobacillales</taxon>
        <taxon>Streptococcaceae</taxon>
        <taxon>Streptococcus</taxon>
    </lineage>
</organism>
<proteinExistence type="inferred from homology"/>
<protein>
    <recommendedName>
        <fullName evidence="1">Small ribosomal subunit protein uS9</fullName>
    </recommendedName>
    <alternativeName>
        <fullName evidence="2">30S ribosomal protein S9</fullName>
    </alternativeName>
</protein>
<keyword id="KW-1185">Reference proteome</keyword>
<keyword id="KW-0687">Ribonucleoprotein</keyword>
<keyword id="KW-0689">Ribosomal protein</keyword>
<feature type="chain" id="PRO_1000051349" description="Small ribosomal subunit protein uS9">
    <location>
        <begin position="1"/>
        <end position="130"/>
    </location>
</feature>
<sequence>MAQAQYAGTGRRKNAVARVRLVPGTGKITVNKKDLEEYIPHADLRLVINQPFAVTSTEGSYDVHVNVVGGGYAGQSGAIRHGIARALLQVDPDFRDSLKRAGLLTRDARMVERKKPGLKKARKASQFSKR</sequence>
<comment type="similarity">
    <text evidence="1">Belongs to the universal ribosomal protein uS9 family.</text>
</comment>
<name>RS9_STRT2</name>
<evidence type="ECO:0000255" key="1">
    <source>
        <dbReference type="HAMAP-Rule" id="MF_00532"/>
    </source>
</evidence>
<evidence type="ECO:0000305" key="2"/>
<reference key="1">
    <citation type="journal article" date="2004" name="Nat. Biotechnol.">
        <title>Complete sequence and comparative genome analysis of the dairy bacterium Streptococcus thermophilus.</title>
        <authorList>
            <person name="Bolotin A."/>
            <person name="Quinquis B."/>
            <person name="Renault P."/>
            <person name="Sorokin A."/>
            <person name="Ehrlich S.D."/>
            <person name="Kulakauskas S."/>
            <person name="Lapidus A."/>
            <person name="Goltsman E."/>
            <person name="Mazur M."/>
            <person name="Pusch G.D."/>
            <person name="Fonstein M."/>
            <person name="Overbeek R."/>
            <person name="Kyprides N."/>
            <person name="Purnelle B."/>
            <person name="Prozzi D."/>
            <person name="Ngui K."/>
            <person name="Masuy D."/>
            <person name="Hancy F."/>
            <person name="Burteau S."/>
            <person name="Boutry M."/>
            <person name="Delcour J."/>
            <person name="Goffeau A."/>
            <person name="Hols P."/>
        </authorList>
    </citation>
    <scope>NUCLEOTIDE SEQUENCE [LARGE SCALE GENOMIC DNA]</scope>
    <source>
        <strain>ATCC BAA-250 / LMG 18311</strain>
    </source>
</reference>
<dbReference type="EMBL" id="CP000023">
    <property type="protein sequence ID" value="AAV59823.1"/>
    <property type="molecule type" value="Genomic_DNA"/>
</dbReference>
<dbReference type="RefSeq" id="WP_002947796.1">
    <property type="nucleotide sequence ID" value="NC_006448.1"/>
</dbReference>
<dbReference type="SMR" id="Q5M6E6"/>
<dbReference type="STRING" id="264199.stu0094"/>
<dbReference type="GeneID" id="66898024"/>
<dbReference type="KEGG" id="stl:stu0094"/>
<dbReference type="eggNOG" id="COG0103">
    <property type="taxonomic scope" value="Bacteria"/>
</dbReference>
<dbReference type="HOGENOM" id="CLU_046483_2_1_9"/>
<dbReference type="Proteomes" id="UP000001170">
    <property type="component" value="Chromosome"/>
</dbReference>
<dbReference type="GO" id="GO:0022627">
    <property type="term" value="C:cytosolic small ribosomal subunit"/>
    <property type="evidence" value="ECO:0007669"/>
    <property type="project" value="TreeGrafter"/>
</dbReference>
<dbReference type="GO" id="GO:0003723">
    <property type="term" value="F:RNA binding"/>
    <property type="evidence" value="ECO:0007669"/>
    <property type="project" value="TreeGrafter"/>
</dbReference>
<dbReference type="GO" id="GO:0003735">
    <property type="term" value="F:structural constituent of ribosome"/>
    <property type="evidence" value="ECO:0007669"/>
    <property type="project" value="InterPro"/>
</dbReference>
<dbReference type="GO" id="GO:0006412">
    <property type="term" value="P:translation"/>
    <property type="evidence" value="ECO:0007669"/>
    <property type="project" value="UniProtKB-UniRule"/>
</dbReference>
<dbReference type="FunFam" id="3.30.230.10:FF:000001">
    <property type="entry name" value="30S ribosomal protein S9"/>
    <property type="match status" value="1"/>
</dbReference>
<dbReference type="Gene3D" id="3.30.230.10">
    <property type="match status" value="1"/>
</dbReference>
<dbReference type="HAMAP" id="MF_00532_B">
    <property type="entry name" value="Ribosomal_uS9_B"/>
    <property type="match status" value="1"/>
</dbReference>
<dbReference type="InterPro" id="IPR020568">
    <property type="entry name" value="Ribosomal_Su5_D2-typ_SF"/>
</dbReference>
<dbReference type="InterPro" id="IPR000754">
    <property type="entry name" value="Ribosomal_uS9"/>
</dbReference>
<dbReference type="InterPro" id="IPR023035">
    <property type="entry name" value="Ribosomal_uS9_bac/plastid"/>
</dbReference>
<dbReference type="InterPro" id="IPR020574">
    <property type="entry name" value="Ribosomal_uS9_CS"/>
</dbReference>
<dbReference type="InterPro" id="IPR014721">
    <property type="entry name" value="Ribsml_uS5_D2-typ_fold_subgr"/>
</dbReference>
<dbReference type="NCBIfam" id="NF001099">
    <property type="entry name" value="PRK00132.1"/>
    <property type="match status" value="1"/>
</dbReference>
<dbReference type="PANTHER" id="PTHR21569">
    <property type="entry name" value="RIBOSOMAL PROTEIN S9"/>
    <property type="match status" value="1"/>
</dbReference>
<dbReference type="PANTHER" id="PTHR21569:SF1">
    <property type="entry name" value="SMALL RIBOSOMAL SUBUNIT PROTEIN US9M"/>
    <property type="match status" value="1"/>
</dbReference>
<dbReference type="Pfam" id="PF00380">
    <property type="entry name" value="Ribosomal_S9"/>
    <property type="match status" value="1"/>
</dbReference>
<dbReference type="SUPFAM" id="SSF54211">
    <property type="entry name" value="Ribosomal protein S5 domain 2-like"/>
    <property type="match status" value="1"/>
</dbReference>
<dbReference type="PROSITE" id="PS00360">
    <property type="entry name" value="RIBOSOMAL_S9"/>
    <property type="match status" value="1"/>
</dbReference>